<reference key="1">
    <citation type="journal article" date="2016" name="Genome Announc.">
        <title>Complete genome sequence of Alkaliphilus metalliredigens strain QYMF, an alkaliphilic and metal-reducing bacterium isolated from borax-contaminated leachate ponds.</title>
        <authorList>
            <person name="Hwang C."/>
            <person name="Copeland A."/>
            <person name="Lucas S."/>
            <person name="Lapidus A."/>
            <person name="Barry K."/>
            <person name="Detter J.C."/>
            <person name="Glavina Del Rio T."/>
            <person name="Hammon N."/>
            <person name="Israni S."/>
            <person name="Dalin E."/>
            <person name="Tice H."/>
            <person name="Pitluck S."/>
            <person name="Chertkov O."/>
            <person name="Brettin T."/>
            <person name="Bruce D."/>
            <person name="Han C."/>
            <person name="Schmutz J."/>
            <person name="Larimer F."/>
            <person name="Land M.L."/>
            <person name="Hauser L."/>
            <person name="Kyrpides N."/>
            <person name="Mikhailova N."/>
            <person name="Ye Q."/>
            <person name="Zhou J."/>
            <person name="Richardson P."/>
            <person name="Fields M.W."/>
        </authorList>
    </citation>
    <scope>NUCLEOTIDE SEQUENCE [LARGE SCALE GENOMIC DNA]</scope>
    <source>
        <strain>QYMF</strain>
    </source>
</reference>
<name>GLMU_ALKMQ</name>
<proteinExistence type="inferred from homology"/>
<evidence type="ECO:0000255" key="1">
    <source>
        <dbReference type="HAMAP-Rule" id="MF_01631"/>
    </source>
</evidence>
<accession>A6TJM5</accession>
<comment type="function">
    <text evidence="1">Catalyzes the last two sequential reactions in the de novo biosynthetic pathway for UDP-N-acetylglucosamine (UDP-GlcNAc). The C-terminal domain catalyzes the transfer of acetyl group from acetyl coenzyme A to glucosamine-1-phosphate (GlcN-1-P) to produce N-acetylglucosamine-1-phosphate (GlcNAc-1-P), which is converted into UDP-GlcNAc by the transfer of uridine 5-monophosphate (from uridine 5-triphosphate), a reaction catalyzed by the N-terminal domain.</text>
</comment>
<comment type="catalytic activity">
    <reaction evidence="1">
        <text>alpha-D-glucosamine 1-phosphate + acetyl-CoA = N-acetyl-alpha-D-glucosamine 1-phosphate + CoA + H(+)</text>
        <dbReference type="Rhea" id="RHEA:13725"/>
        <dbReference type="ChEBI" id="CHEBI:15378"/>
        <dbReference type="ChEBI" id="CHEBI:57287"/>
        <dbReference type="ChEBI" id="CHEBI:57288"/>
        <dbReference type="ChEBI" id="CHEBI:57776"/>
        <dbReference type="ChEBI" id="CHEBI:58516"/>
        <dbReference type="EC" id="2.3.1.157"/>
    </reaction>
</comment>
<comment type="catalytic activity">
    <reaction evidence="1">
        <text>N-acetyl-alpha-D-glucosamine 1-phosphate + UTP + H(+) = UDP-N-acetyl-alpha-D-glucosamine + diphosphate</text>
        <dbReference type="Rhea" id="RHEA:13509"/>
        <dbReference type="ChEBI" id="CHEBI:15378"/>
        <dbReference type="ChEBI" id="CHEBI:33019"/>
        <dbReference type="ChEBI" id="CHEBI:46398"/>
        <dbReference type="ChEBI" id="CHEBI:57705"/>
        <dbReference type="ChEBI" id="CHEBI:57776"/>
        <dbReference type="EC" id="2.7.7.23"/>
    </reaction>
</comment>
<comment type="cofactor">
    <cofactor evidence="1">
        <name>Mg(2+)</name>
        <dbReference type="ChEBI" id="CHEBI:18420"/>
    </cofactor>
    <text evidence="1">Binds 1 Mg(2+) ion per subunit.</text>
</comment>
<comment type="pathway">
    <text evidence="1">Nucleotide-sugar biosynthesis; UDP-N-acetyl-alpha-D-glucosamine biosynthesis; N-acetyl-alpha-D-glucosamine 1-phosphate from alpha-D-glucosamine 6-phosphate (route II): step 2/2.</text>
</comment>
<comment type="pathway">
    <text evidence="1">Nucleotide-sugar biosynthesis; UDP-N-acetyl-alpha-D-glucosamine biosynthesis; UDP-N-acetyl-alpha-D-glucosamine from N-acetyl-alpha-D-glucosamine 1-phosphate: step 1/1.</text>
</comment>
<comment type="pathway">
    <text evidence="1">Bacterial outer membrane biogenesis; LPS lipid A biosynthesis.</text>
</comment>
<comment type="subunit">
    <text evidence="1">Homotrimer.</text>
</comment>
<comment type="subcellular location">
    <subcellularLocation>
        <location evidence="1">Cytoplasm</location>
    </subcellularLocation>
</comment>
<comment type="similarity">
    <text evidence="1">In the N-terminal section; belongs to the N-acetylglucosamine-1-phosphate uridyltransferase family.</text>
</comment>
<comment type="similarity">
    <text evidence="1">In the C-terminal section; belongs to the transferase hexapeptide repeat family.</text>
</comment>
<sequence length="456" mass="49919">MKLKAIILAAGTGTRMKSKMPKVLHKVCGQTMLGHVIDVSKDSKAEECIVVVGHGAEEVQKTLPEGVKTVLQAEQLGTGHAVMVAEEHIETQGTVLVLYGDGPLITEETLNALMTYHQEGKYSATVLTAELENPTGYGRIIRDDDDRLKTIVEEKDTTVGEKEVREINSGIYCFDSKVLKETLPKIQNNNSQKEYYLTDALTIIKQEGLKVGVYQIENYEDIMAVNSREQLAEVEEVMQRRIVKKHMEAGVTFIDPQSTYIEKTVKVGMDTILHPGVILKGATEIGEDCIIGHNSRIENSILKNGIEVQSSTIIESTIDDHATIGPYAYLRPQSHIGKHVKVGDFVEVKNATIDDHSKAAHLAYIGDAEIGKHVNIGCGVIFVNYDGIKKHKTIIKDHAFVGSNSNLVAPITIQESAFVASGSTITREVPAGALAVGRSRQENKEGWVARKGVGKK</sequence>
<protein>
    <recommendedName>
        <fullName evidence="1">Bifunctional protein GlmU</fullName>
    </recommendedName>
    <domain>
        <recommendedName>
            <fullName evidence="1">UDP-N-acetylglucosamine pyrophosphorylase</fullName>
            <ecNumber evidence="1">2.7.7.23</ecNumber>
        </recommendedName>
        <alternativeName>
            <fullName evidence="1">N-acetylglucosamine-1-phosphate uridyltransferase</fullName>
        </alternativeName>
    </domain>
    <domain>
        <recommendedName>
            <fullName evidence="1">Glucosamine-1-phosphate N-acetyltransferase</fullName>
            <ecNumber evidence="1">2.3.1.157</ecNumber>
        </recommendedName>
    </domain>
</protein>
<dbReference type="EC" id="2.7.7.23" evidence="1"/>
<dbReference type="EC" id="2.3.1.157" evidence="1"/>
<dbReference type="EMBL" id="CP000724">
    <property type="protein sequence ID" value="ABR46393.1"/>
    <property type="molecule type" value="Genomic_DNA"/>
</dbReference>
<dbReference type="RefSeq" id="WP_011971302.1">
    <property type="nucleotide sequence ID" value="NC_009633.1"/>
</dbReference>
<dbReference type="SMR" id="A6TJM5"/>
<dbReference type="STRING" id="293826.Amet_0156"/>
<dbReference type="KEGG" id="amt:Amet_0156"/>
<dbReference type="eggNOG" id="COG1207">
    <property type="taxonomic scope" value="Bacteria"/>
</dbReference>
<dbReference type="HOGENOM" id="CLU_029499_15_2_9"/>
<dbReference type="OrthoDB" id="9775031at2"/>
<dbReference type="UniPathway" id="UPA00113">
    <property type="reaction ID" value="UER00532"/>
</dbReference>
<dbReference type="UniPathway" id="UPA00113">
    <property type="reaction ID" value="UER00533"/>
</dbReference>
<dbReference type="UniPathway" id="UPA00973"/>
<dbReference type="Proteomes" id="UP000001572">
    <property type="component" value="Chromosome"/>
</dbReference>
<dbReference type="GO" id="GO:0005737">
    <property type="term" value="C:cytoplasm"/>
    <property type="evidence" value="ECO:0007669"/>
    <property type="project" value="UniProtKB-SubCell"/>
</dbReference>
<dbReference type="GO" id="GO:0016020">
    <property type="term" value="C:membrane"/>
    <property type="evidence" value="ECO:0007669"/>
    <property type="project" value="GOC"/>
</dbReference>
<dbReference type="GO" id="GO:0019134">
    <property type="term" value="F:glucosamine-1-phosphate N-acetyltransferase activity"/>
    <property type="evidence" value="ECO:0007669"/>
    <property type="project" value="UniProtKB-UniRule"/>
</dbReference>
<dbReference type="GO" id="GO:0000287">
    <property type="term" value="F:magnesium ion binding"/>
    <property type="evidence" value="ECO:0007669"/>
    <property type="project" value="UniProtKB-UniRule"/>
</dbReference>
<dbReference type="GO" id="GO:0003977">
    <property type="term" value="F:UDP-N-acetylglucosamine diphosphorylase activity"/>
    <property type="evidence" value="ECO:0007669"/>
    <property type="project" value="UniProtKB-UniRule"/>
</dbReference>
<dbReference type="GO" id="GO:0000902">
    <property type="term" value="P:cell morphogenesis"/>
    <property type="evidence" value="ECO:0007669"/>
    <property type="project" value="UniProtKB-UniRule"/>
</dbReference>
<dbReference type="GO" id="GO:0071555">
    <property type="term" value="P:cell wall organization"/>
    <property type="evidence" value="ECO:0007669"/>
    <property type="project" value="UniProtKB-KW"/>
</dbReference>
<dbReference type="GO" id="GO:0009245">
    <property type="term" value="P:lipid A biosynthetic process"/>
    <property type="evidence" value="ECO:0007669"/>
    <property type="project" value="UniProtKB-UniRule"/>
</dbReference>
<dbReference type="GO" id="GO:0009252">
    <property type="term" value="P:peptidoglycan biosynthetic process"/>
    <property type="evidence" value="ECO:0007669"/>
    <property type="project" value="UniProtKB-UniRule"/>
</dbReference>
<dbReference type="GO" id="GO:0008360">
    <property type="term" value="P:regulation of cell shape"/>
    <property type="evidence" value="ECO:0007669"/>
    <property type="project" value="UniProtKB-KW"/>
</dbReference>
<dbReference type="GO" id="GO:0006048">
    <property type="term" value="P:UDP-N-acetylglucosamine biosynthetic process"/>
    <property type="evidence" value="ECO:0007669"/>
    <property type="project" value="UniProtKB-UniPathway"/>
</dbReference>
<dbReference type="CDD" id="cd02540">
    <property type="entry name" value="GT2_GlmU_N_bac"/>
    <property type="match status" value="1"/>
</dbReference>
<dbReference type="CDD" id="cd03353">
    <property type="entry name" value="LbH_GlmU_C"/>
    <property type="match status" value="1"/>
</dbReference>
<dbReference type="Gene3D" id="2.160.10.10">
    <property type="entry name" value="Hexapeptide repeat proteins"/>
    <property type="match status" value="1"/>
</dbReference>
<dbReference type="Gene3D" id="3.90.550.10">
    <property type="entry name" value="Spore Coat Polysaccharide Biosynthesis Protein SpsA, Chain A"/>
    <property type="match status" value="1"/>
</dbReference>
<dbReference type="HAMAP" id="MF_01631">
    <property type="entry name" value="GlmU"/>
    <property type="match status" value="1"/>
</dbReference>
<dbReference type="InterPro" id="IPR005882">
    <property type="entry name" value="Bifunctional_GlmU"/>
</dbReference>
<dbReference type="InterPro" id="IPR050065">
    <property type="entry name" value="GlmU-like"/>
</dbReference>
<dbReference type="InterPro" id="IPR038009">
    <property type="entry name" value="GlmU_C_LbH"/>
</dbReference>
<dbReference type="InterPro" id="IPR001451">
    <property type="entry name" value="Hexapep"/>
</dbReference>
<dbReference type="InterPro" id="IPR025877">
    <property type="entry name" value="MobA-like_NTP_Trfase"/>
</dbReference>
<dbReference type="InterPro" id="IPR029044">
    <property type="entry name" value="Nucleotide-diphossugar_trans"/>
</dbReference>
<dbReference type="InterPro" id="IPR011004">
    <property type="entry name" value="Trimer_LpxA-like_sf"/>
</dbReference>
<dbReference type="NCBIfam" id="TIGR01173">
    <property type="entry name" value="glmU"/>
    <property type="match status" value="1"/>
</dbReference>
<dbReference type="NCBIfam" id="NF010934">
    <property type="entry name" value="PRK14354.1"/>
    <property type="match status" value="1"/>
</dbReference>
<dbReference type="PANTHER" id="PTHR43584:SF3">
    <property type="entry name" value="BIFUNCTIONAL PROTEIN GLMU"/>
    <property type="match status" value="1"/>
</dbReference>
<dbReference type="PANTHER" id="PTHR43584">
    <property type="entry name" value="NUCLEOTIDYL TRANSFERASE"/>
    <property type="match status" value="1"/>
</dbReference>
<dbReference type="Pfam" id="PF00132">
    <property type="entry name" value="Hexapep"/>
    <property type="match status" value="1"/>
</dbReference>
<dbReference type="Pfam" id="PF12804">
    <property type="entry name" value="NTP_transf_3"/>
    <property type="match status" value="1"/>
</dbReference>
<dbReference type="SUPFAM" id="SSF53448">
    <property type="entry name" value="Nucleotide-diphospho-sugar transferases"/>
    <property type="match status" value="1"/>
</dbReference>
<dbReference type="SUPFAM" id="SSF51161">
    <property type="entry name" value="Trimeric LpxA-like enzymes"/>
    <property type="match status" value="1"/>
</dbReference>
<gene>
    <name evidence="1" type="primary">glmU</name>
    <name type="ordered locus">Amet_0156</name>
</gene>
<organism>
    <name type="scientific">Alkaliphilus metalliredigens (strain QYMF)</name>
    <dbReference type="NCBI Taxonomy" id="293826"/>
    <lineage>
        <taxon>Bacteria</taxon>
        <taxon>Bacillati</taxon>
        <taxon>Bacillota</taxon>
        <taxon>Clostridia</taxon>
        <taxon>Peptostreptococcales</taxon>
        <taxon>Natronincolaceae</taxon>
        <taxon>Alkaliphilus</taxon>
    </lineage>
</organism>
<feature type="chain" id="PRO_1000069728" description="Bifunctional protein GlmU">
    <location>
        <begin position="1"/>
        <end position="456"/>
    </location>
</feature>
<feature type="region of interest" description="Pyrophosphorylase" evidence="1">
    <location>
        <begin position="1"/>
        <end position="228"/>
    </location>
</feature>
<feature type="region of interest" description="Linker" evidence="1">
    <location>
        <begin position="229"/>
        <end position="249"/>
    </location>
</feature>
<feature type="region of interest" description="N-acetyltransferase" evidence="1">
    <location>
        <begin position="250"/>
        <end position="456"/>
    </location>
</feature>
<feature type="active site" description="Proton acceptor" evidence="1">
    <location>
        <position position="361"/>
    </location>
</feature>
<feature type="binding site" evidence="1">
    <location>
        <begin position="8"/>
        <end position="11"/>
    </location>
    <ligand>
        <name>UDP-N-acetyl-alpha-D-glucosamine</name>
        <dbReference type="ChEBI" id="CHEBI:57705"/>
    </ligand>
</feature>
<feature type="binding site" evidence="1">
    <location>
        <position position="22"/>
    </location>
    <ligand>
        <name>UDP-N-acetyl-alpha-D-glucosamine</name>
        <dbReference type="ChEBI" id="CHEBI:57705"/>
    </ligand>
</feature>
<feature type="binding site" evidence="1">
    <location>
        <position position="72"/>
    </location>
    <ligand>
        <name>UDP-N-acetyl-alpha-D-glucosamine</name>
        <dbReference type="ChEBI" id="CHEBI:57705"/>
    </ligand>
</feature>
<feature type="binding site" evidence="1">
    <location>
        <begin position="77"/>
        <end position="78"/>
    </location>
    <ligand>
        <name>UDP-N-acetyl-alpha-D-glucosamine</name>
        <dbReference type="ChEBI" id="CHEBI:57705"/>
    </ligand>
</feature>
<feature type="binding site" evidence="1">
    <location>
        <begin position="99"/>
        <end position="101"/>
    </location>
    <ligand>
        <name>UDP-N-acetyl-alpha-D-glucosamine</name>
        <dbReference type="ChEBI" id="CHEBI:57705"/>
    </ligand>
</feature>
<feature type="binding site" evidence="1">
    <location>
        <position position="101"/>
    </location>
    <ligand>
        <name>Mg(2+)</name>
        <dbReference type="ChEBI" id="CHEBI:18420"/>
    </ligand>
</feature>
<feature type="binding site" evidence="1">
    <location>
        <position position="138"/>
    </location>
    <ligand>
        <name>UDP-N-acetyl-alpha-D-glucosamine</name>
        <dbReference type="ChEBI" id="CHEBI:57705"/>
    </ligand>
</feature>
<feature type="binding site" evidence="1">
    <location>
        <position position="153"/>
    </location>
    <ligand>
        <name>UDP-N-acetyl-alpha-D-glucosamine</name>
        <dbReference type="ChEBI" id="CHEBI:57705"/>
    </ligand>
</feature>
<feature type="binding site" evidence="1">
    <location>
        <position position="168"/>
    </location>
    <ligand>
        <name>UDP-N-acetyl-alpha-D-glucosamine</name>
        <dbReference type="ChEBI" id="CHEBI:57705"/>
    </ligand>
</feature>
<feature type="binding site" evidence="1">
    <location>
        <position position="226"/>
    </location>
    <ligand>
        <name>Mg(2+)</name>
        <dbReference type="ChEBI" id="CHEBI:18420"/>
    </ligand>
</feature>
<feature type="binding site" evidence="1">
    <location>
        <position position="226"/>
    </location>
    <ligand>
        <name>UDP-N-acetyl-alpha-D-glucosamine</name>
        <dbReference type="ChEBI" id="CHEBI:57705"/>
    </ligand>
</feature>
<feature type="binding site" evidence="1">
    <location>
        <position position="331"/>
    </location>
    <ligand>
        <name>UDP-N-acetyl-alpha-D-glucosamine</name>
        <dbReference type="ChEBI" id="CHEBI:57705"/>
    </ligand>
</feature>
<feature type="binding site" evidence="1">
    <location>
        <position position="349"/>
    </location>
    <ligand>
        <name>UDP-N-acetyl-alpha-D-glucosamine</name>
        <dbReference type="ChEBI" id="CHEBI:57705"/>
    </ligand>
</feature>
<feature type="binding site" evidence="1">
    <location>
        <position position="364"/>
    </location>
    <ligand>
        <name>UDP-N-acetyl-alpha-D-glucosamine</name>
        <dbReference type="ChEBI" id="CHEBI:57705"/>
    </ligand>
</feature>
<feature type="binding site" evidence="1">
    <location>
        <position position="375"/>
    </location>
    <ligand>
        <name>UDP-N-acetyl-alpha-D-glucosamine</name>
        <dbReference type="ChEBI" id="CHEBI:57705"/>
    </ligand>
</feature>
<feature type="binding site" evidence="1">
    <location>
        <begin position="384"/>
        <end position="385"/>
    </location>
    <ligand>
        <name>acetyl-CoA</name>
        <dbReference type="ChEBI" id="CHEBI:57288"/>
    </ligand>
</feature>
<feature type="binding site" evidence="1">
    <location>
        <position position="403"/>
    </location>
    <ligand>
        <name>acetyl-CoA</name>
        <dbReference type="ChEBI" id="CHEBI:57288"/>
    </ligand>
</feature>
<feature type="binding site" evidence="1">
    <location>
        <position position="421"/>
    </location>
    <ligand>
        <name>acetyl-CoA</name>
        <dbReference type="ChEBI" id="CHEBI:57288"/>
    </ligand>
</feature>
<feature type="binding site" evidence="1">
    <location>
        <position position="438"/>
    </location>
    <ligand>
        <name>acetyl-CoA</name>
        <dbReference type="ChEBI" id="CHEBI:57288"/>
    </ligand>
</feature>
<keyword id="KW-0012">Acyltransferase</keyword>
<keyword id="KW-0133">Cell shape</keyword>
<keyword id="KW-0961">Cell wall biogenesis/degradation</keyword>
<keyword id="KW-0963">Cytoplasm</keyword>
<keyword id="KW-0460">Magnesium</keyword>
<keyword id="KW-0479">Metal-binding</keyword>
<keyword id="KW-0511">Multifunctional enzyme</keyword>
<keyword id="KW-0548">Nucleotidyltransferase</keyword>
<keyword id="KW-0573">Peptidoglycan synthesis</keyword>
<keyword id="KW-1185">Reference proteome</keyword>
<keyword id="KW-0677">Repeat</keyword>
<keyword id="KW-0808">Transferase</keyword>